<sequence length="160" mass="17630">MGIEGVLKKGFITTSADTVLNYMRTGSLWPVTFGLACCAVEMMHAGMARYDLDRFGIIFRPSPRQADLMIVAGTLTNKMAPALRRVYDQLAEPRWVLSMGSCANGGGYYHYSYSVVRGADRVVPVDVYVPGCPPTAEALIYGLIQLQQKIKRTSTIARDE</sequence>
<keyword id="KW-0004">4Fe-4S</keyword>
<keyword id="KW-0997">Cell inner membrane</keyword>
<keyword id="KW-1003">Cell membrane</keyword>
<keyword id="KW-0408">Iron</keyword>
<keyword id="KW-0411">Iron-sulfur</keyword>
<keyword id="KW-0472">Membrane</keyword>
<keyword id="KW-0479">Metal-binding</keyword>
<keyword id="KW-0520">NAD</keyword>
<keyword id="KW-0874">Quinone</keyword>
<keyword id="KW-1185">Reference proteome</keyword>
<keyword id="KW-1278">Translocase</keyword>
<keyword id="KW-0813">Transport</keyword>
<keyword id="KW-0830">Ubiquinone</keyword>
<reference key="1">
    <citation type="journal article" date="2000" name="Science">
        <title>Complete genome sequence of Neisseria meningitidis serogroup B strain MC58.</title>
        <authorList>
            <person name="Tettelin H."/>
            <person name="Saunders N.J."/>
            <person name="Heidelberg J.F."/>
            <person name="Jeffries A.C."/>
            <person name="Nelson K.E."/>
            <person name="Eisen J.A."/>
            <person name="Ketchum K.A."/>
            <person name="Hood D.W."/>
            <person name="Peden J.F."/>
            <person name="Dodson R.J."/>
            <person name="Nelson W.C."/>
            <person name="Gwinn M.L."/>
            <person name="DeBoy R.T."/>
            <person name="Peterson J.D."/>
            <person name="Hickey E.K."/>
            <person name="Haft D.H."/>
            <person name="Salzberg S.L."/>
            <person name="White O."/>
            <person name="Fleischmann R.D."/>
            <person name="Dougherty B.A."/>
            <person name="Mason T.M."/>
            <person name="Ciecko A."/>
            <person name="Parksey D.S."/>
            <person name="Blair E."/>
            <person name="Cittone H."/>
            <person name="Clark E.B."/>
            <person name="Cotton M.D."/>
            <person name="Utterback T.R."/>
            <person name="Khouri H.M."/>
            <person name="Qin H."/>
            <person name="Vamathevan J.J."/>
            <person name="Gill J."/>
            <person name="Scarlato V."/>
            <person name="Masignani V."/>
            <person name="Pizza M."/>
            <person name="Grandi G."/>
            <person name="Sun L."/>
            <person name="Smith H.O."/>
            <person name="Fraser C.M."/>
            <person name="Moxon E.R."/>
            <person name="Rappuoli R."/>
            <person name="Venter J.C."/>
        </authorList>
    </citation>
    <scope>NUCLEOTIDE SEQUENCE [LARGE SCALE GENOMIC DNA]</scope>
    <source>
        <strain>ATCC BAA-335 / MC58</strain>
    </source>
</reference>
<organism>
    <name type="scientific">Neisseria meningitidis serogroup B (strain ATCC BAA-335 / MC58)</name>
    <dbReference type="NCBI Taxonomy" id="122586"/>
    <lineage>
        <taxon>Bacteria</taxon>
        <taxon>Pseudomonadati</taxon>
        <taxon>Pseudomonadota</taxon>
        <taxon>Betaproteobacteria</taxon>
        <taxon>Neisseriales</taxon>
        <taxon>Neisseriaceae</taxon>
        <taxon>Neisseria</taxon>
    </lineage>
</organism>
<comment type="function">
    <text evidence="1">NDH-1 shuttles electrons from NADH, via FMN and iron-sulfur (Fe-S) centers, to quinones in the respiratory chain. Couples the redox reaction to proton translocation (for every two electrons transferred, four hydrogen ions are translocated across the cytoplasmic membrane), and thus conserves the redox energy in a proton gradient (By similarity).</text>
</comment>
<comment type="catalytic activity">
    <reaction evidence="2">
        <text>a quinone + NADH + 5 H(+)(in) = a quinol + NAD(+) + 4 H(+)(out)</text>
        <dbReference type="Rhea" id="RHEA:57888"/>
        <dbReference type="ChEBI" id="CHEBI:15378"/>
        <dbReference type="ChEBI" id="CHEBI:24646"/>
        <dbReference type="ChEBI" id="CHEBI:57540"/>
        <dbReference type="ChEBI" id="CHEBI:57945"/>
        <dbReference type="ChEBI" id="CHEBI:132124"/>
    </reaction>
</comment>
<comment type="cofactor">
    <cofactor evidence="2">
        <name>[4Fe-4S] cluster</name>
        <dbReference type="ChEBI" id="CHEBI:49883"/>
    </cofactor>
    <text evidence="2">Binds 1 [4Fe-4S] cluster.</text>
</comment>
<comment type="subunit">
    <text evidence="2">NDH-1 is composed of 14 different subunits. Subunits NuoB, C, D, E, F, and G constitute the peripheral sector of the complex.</text>
</comment>
<comment type="subcellular location">
    <subcellularLocation>
        <location evidence="2">Cell inner membrane</location>
        <topology evidence="2">Peripheral membrane protein</topology>
        <orientation evidence="2">Cytoplasmic side</orientation>
    </subcellularLocation>
</comment>
<comment type="similarity">
    <text evidence="2">Belongs to the complex I 20 kDa subunit family.</text>
</comment>
<dbReference type="EC" id="7.1.1.-" evidence="2"/>
<dbReference type="EMBL" id="AE002098">
    <property type="protein sequence ID" value="AAF40696.1"/>
    <property type="molecule type" value="Genomic_DNA"/>
</dbReference>
<dbReference type="PIR" id="H81221">
    <property type="entry name" value="H81221"/>
</dbReference>
<dbReference type="RefSeq" id="NP_273298.1">
    <property type="nucleotide sequence ID" value="NC_003112.2"/>
</dbReference>
<dbReference type="RefSeq" id="WP_002215610.1">
    <property type="nucleotide sequence ID" value="NC_003112.2"/>
</dbReference>
<dbReference type="SMR" id="Q9K1C2"/>
<dbReference type="FunCoup" id="Q9K1C2">
    <property type="interactions" value="317"/>
</dbReference>
<dbReference type="STRING" id="122586.NMB0242"/>
<dbReference type="PaxDb" id="122586-NMB0242"/>
<dbReference type="KEGG" id="nme:NMB0242"/>
<dbReference type="PATRIC" id="fig|122586.8.peg.304"/>
<dbReference type="HOGENOM" id="CLU_055737_7_3_4"/>
<dbReference type="InParanoid" id="Q9K1C2"/>
<dbReference type="OrthoDB" id="9786737at2"/>
<dbReference type="PRO" id="PR:Q9K1C2"/>
<dbReference type="Proteomes" id="UP000000425">
    <property type="component" value="Chromosome"/>
</dbReference>
<dbReference type="GO" id="GO:0005886">
    <property type="term" value="C:plasma membrane"/>
    <property type="evidence" value="ECO:0007669"/>
    <property type="project" value="UniProtKB-SubCell"/>
</dbReference>
<dbReference type="GO" id="GO:0045271">
    <property type="term" value="C:respiratory chain complex I"/>
    <property type="evidence" value="ECO:0000318"/>
    <property type="project" value="GO_Central"/>
</dbReference>
<dbReference type="GO" id="GO:0051539">
    <property type="term" value="F:4 iron, 4 sulfur cluster binding"/>
    <property type="evidence" value="ECO:0007669"/>
    <property type="project" value="UniProtKB-KW"/>
</dbReference>
<dbReference type="GO" id="GO:0005506">
    <property type="term" value="F:iron ion binding"/>
    <property type="evidence" value="ECO:0007669"/>
    <property type="project" value="UniProtKB-UniRule"/>
</dbReference>
<dbReference type="GO" id="GO:0008137">
    <property type="term" value="F:NADH dehydrogenase (ubiquinone) activity"/>
    <property type="evidence" value="ECO:0000318"/>
    <property type="project" value="GO_Central"/>
</dbReference>
<dbReference type="GO" id="GO:0050136">
    <property type="term" value="F:NADH:ubiquinone reductase (non-electrogenic) activity"/>
    <property type="evidence" value="ECO:0007669"/>
    <property type="project" value="UniProtKB-UniRule"/>
</dbReference>
<dbReference type="GO" id="GO:0048038">
    <property type="term" value="F:quinone binding"/>
    <property type="evidence" value="ECO:0007669"/>
    <property type="project" value="UniProtKB-KW"/>
</dbReference>
<dbReference type="GO" id="GO:0009060">
    <property type="term" value="P:aerobic respiration"/>
    <property type="evidence" value="ECO:0000318"/>
    <property type="project" value="GO_Central"/>
</dbReference>
<dbReference type="GO" id="GO:0015990">
    <property type="term" value="P:electron transport coupled proton transport"/>
    <property type="evidence" value="ECO:0000318"/>
    <property type="project" value="GO_Central"/>
</dbReference>
<dbReference type="FunFam" id="3.40.50.12280:FF:000001">
    <property type="entry name" value="NADH-quinone oxidoreductase subunit B 2"/>
    <property type="match status" value="1"/>
</dbReference>
<dbReference type="Gene3D" id="3.40.50.12280">
    <property type="match status" value="1"/>
</dbReference>
<dbReference type="HAMAP" id="MF_01356">
    <property type="entry name" value="NDH1_NuoB"/>
    <property type="match status" value="1"/>
</dbReference>
<dbReference type="InterPro" id="IPR006137">
    <property type="entry name" value="NADH_UbQ_OxRdtase-like_20kDa"/>
</dbReference>
<dbReference type="InterPro" id="IPR006138">
    <property type="entry name" value="NADH_UQ_OxRdtase_20Kd_su"/>
</dbReference>
<dbReference type="NCBIfam" id="TIGR01957">
    <property type="entry name" value="nuoB_fam"/>
    <property type="match status" value="1"/>
</dbReference>
<dbReference type="NCBIfam" id="NF005012">
    <property type="entry name" value="PRK06411.1"/>
    <property type="match status" value="1"/>
</dbReference>
<dbReference type="PANTHER" id="PTHR11995">
    <property type="entry name" value="NADH DEHYDROGENASE"/>
    <property type="match status" value="1"/>
</dbReference>
<dbReference type="PANTHER" id="PTHR11995:SF14">
    <property type="entry name" value="NADH DEHYDROGENASE [UBIQUINONE] IRON-SULFUR PROTEIN 7, MITOCHONDRIAL"/>
    <property type="match status" value="1"/>
</dbReference>
<dbReference type="Pfam" id="PF01058">
    <property type="entry name" value="Oxidored_q6"/>
    <property type="match status" value="1"/>
</dbReference>
<dbReference type="SUPFAM" id="SSF56770">
    <property type="entry name" value="HydA/Nqo6-like"/>
    <property type="match status" value="1"/>
</dbReference>
<dbReference type="PROSITE" id="PS01150">
    <property type="entry name" value="COMPLEX1_20K"/>
    <property type="match status" value="1"/>
</dbReference>
<protein>
    <recommendedName>
        <fullName evidence="2">NADH-quinone oxidoreductase subunit B</fullName>
        <ecNumber evidence="2">7.1.1.-</ecNumber>
    </recommendedName>
    <alternativeName>
        <fullName evidence="2">NADH dehydrogenase I subunit B</fullName>
    </alternativeName>
    <alternativeName>
        <fullName evidence="2">NDH-1 subunit B</fullName>
    </alternativeName>
</protein>
<evidence type="ECO:0000250" key="1"/>
<evidence type="ECO:0000255" key="2">
    <source>
        <dbReference type="HAMAP-Rule" id="MF_01356"/>
    </source>
</evidence>
<gene>
    <name evidence="2" type="primary">nuoB</name>
    <name type="ordered locus">NMB0242</name>
</gene>
<name>NUOB_NEIMB</name>
<feature type="chain" id="PRO_0000358430" description="NADH-quinone oxidoreductase subunit B">
    <location>
        <begin position="1"/>
        <end position="160"/>
    </location>
</feature>
<feature type="binding site" evidence="2">
    <location>
        <position position="37"/>
    </location>
    <ligand>
        <name>[4Fe-4S] cluster</name>
        <dbReference type="ChEBI" id="CHEBI:49883"/>
    </ligand>
</feature>
<feature type="binding site" evidence="2">
    <location>
        <position position="38"/>
    </location>
    <ligand>
        <name>[4Fe-4S] cluster</name>
        <dbReference type="ChEBI" id="CHEBI:49883"/>
    </ligand>
</feature>
<feature type="binding site" evidence="2">
    <location>
        <position position="102"/>
    </location>
    <ligand>
        <name>[4Fe-4S] cluster</name>
        <dbReference type="ChEBI" id="CHEBI:49883"/>
    </ligand>
</feature>
<feature type="binding site" evidence="2">
    <location>
        <position position="132"/>
    </location>
    <ligand>
        <name>[4Fe-4S] cluster</name>
        <dbReference type="ChEBI" id="CHEBI:49883"/>
    </ligand>
</feature>
<proteinExistence type="inferred from homology"/>
<accession>Q9K1C2</accession>